<sequence>MKTLLLDLALWSLLFQPGWLSFSSQVSQNCHNGSYEISVLMMGNSAFAEPLKNLEDAVNEGLEIVRGRLQNAGLNVTVNATFMYSDGLIHNSGDCRSSTCEGLDLLRKISNAQRMGCVLIGPSCTYSTFQMYLDTELSYPMISAGSFGLSCDYKETLTRLMSPARKLMYFLVNFWKTNDLPFKTYSWSTSYVYKNGTETEDCFWYLNALEASVSYFSHELGFKVVLRQDKEFQDILMDHNRKSNVIIMCGGPEFLYKLKGDRAVAEDIVIILVDLFNDQYFEDNVTAPDYMKNVLVLTLSPGNSLLNSSFSRNLSPTKRDFALAYLNGILLFGHMLKIFLENGENITTPKFAHAFRNLTFEGYDGPVTLDDWGDVDSTMVLLYTSVDTKKYKVLLTYDTHVNKTYPVDMSPTFTWKNSKLPNDITGRGPQILMIAVFTLTGAVVLLLLVALLMLRKYRKDYELRQKKWSHIPPENIFPLETNETNHVSLKIDDDKRRDTIQRLRQCKYDKKRVILKDLKHNDGNFTEKQKIELNKLLQIDYYNLTKFYGTVKLDTMIFGVIEYCERGSLREVLNDTISYPDGTFMDWEFKISVLYDIAKGMSYLHSSKTEVHGRLKSTNCVVDSRMVVKITDFGCNSILPPKKDLWTAPEHLRQANISQKGDVYSYGIIAQEIILRKETFYTLSCRDRNEKIFRVENSNGMKPFRPDLFLETAEEKELEVYLLVKNCWEEDPEKRPDFKKIETTLAKIFGLFHDQKNESYMDTLIRRLQLYSRNLEHLVEERTQLYKAERDRADRLNFMLLPRLVVKSLKEKGFVEPELYEEVTIYFSDIVGFTTICKYSTPMEVVDMLNDIYKSFDHIVDHHDVYKVETIGDAYMVASGLPKRNGNRHAIDIAKMALEILSFMGTFELEHLPGLPIWIRIGVHSGPCAAGVVGIKMPRYCLFGDTVNTASRMESTGLPLRIHVSGSTIAILKRTECQFLYEVRGETYLKGRGNETTYWLTGMKDQKFNLPTPPTVENQQRLQAEFSDMIANSLQKRQAAGIRSQKPRRVASYKKGTLEYLQLNTTDKESTYF</sequence>
<protein>
    <recommendedName>
        <fullName evidence="15">Guanylyl cyclase C</fullName>
        <shortName evidence="15">GC-C</shortName>
        <ecNumber evidence="5 12 19">4.6.1.2</ecNumber>
    </recommendedName>
    <alternativeName>
        <fullName evidence="16">Heat-stable enterotoxin receptor</fullName>
        <shortName evidence="16">STA receptor</shortName>
        <shortName evidence="16">hSTAR</shortName>
    </alternativeName>
    <alternativeName>
        <fullName>Intestinal guanylate cyclase</fullName>
    </alternativeName>
</protein>
<name>GUC2C_HUMAN</name>
<dbReference type="EC" id="4.6.1.2" evidence="5 12 19"/>
<dbReference type="EMBL" id="S57551">
    <property type="protein sequence ID" value="AAB19934.2"/>
    <property type="molecule type" value="mRNA"/>
</dbReference>
<dbReference type="EMBL" id="M73489">
    <property type="protein sequence ID" value="AAA36655.1"/>
    <property type="molecule type" value="mRNA"/>
</dbReference>
<dbReference type="EMBL" id="AC007545">
    <property type="status" value="NOT_ANNOTATED_CDS"/>
    <property type="molecule type" value="Genomic_DNA"/>
</dbReference>
<dbReference type="EMBL" id="AC010168">
    <property type="status" value="NOT_ANNOTATED_CDS"/>
    <property type="molecule type" value="Genomic_DNA"/>
</dbReference>
<dbReference type="EMBL" id="CH471094">
    <property type="protein sequence ID" value="EAW96324.1"/>
    <property type="molecule type" value="Genomic_DNA"/>
</dbReference>
<dbReference type="EMBL" id="BC136544">
    <property type="protein sequence ID" value="AAI36545.1"/>
    <property type="molecule type" value="mRNA"/>
</dbReference>
<dbReference type="EMBL" id="BC136545">
    <property type="protein sequence ID" value="AAI36546.1"/>
    <property type="molecule type" value="mRNA"/>
</dbReference>
<dbReference type="EMBL" id="U20230">
    <property type="protein sequence ID" value="AAC50381.1"/>
    <property type="molecule type" value="Genomic_DNA"/>
</dbReference>
<dbReference type="CCDS" id="CCDS8664.1"/>
<dbReference type="PIR" id="A40940">
    <property type="entry name" value="OYHUHX"/>
</dbReference>
<dbReference type="RefSeq" id="NP_004954.2">
    <property type="nucleotide sequence ID" value="NM_004963.4"/>
</dbReference>
<dbReference type="PDB" id="8FX4">
    <property type="method" value="EM"/>
    <property type="resolution" value="3.90 A"/>
    <property type="chains" value="D=419-1073"/>
</dbReference>
<dbReference type="PDB" id="8GHO">
    <property type="method" value="X-ray"/>
    <property type="resolution" value="1.60 A"/>
    <property type="chains" value="C/G=93-110"/>
</dbReference>
<dbReference type="PDB" id="8GHP">
    <property type="method" value="X-ray"/>
    <property type="resolution" value="3.52 A"/>
    <property type="chains" value="A=24-430"/>
</dbReference>
<dbReference type="PDBsum" id="8FX4"/>
<dbReference type="PDBsum" id="8GHO"/>
<dbReference type="PDBsum" id="8GHP"/>
<dbReference type="EMDB" id="EMD-29523"/>
<dbReference type="SMR" id="P25092"/>
<dbReference type="BioGRID" id="109239">
    <property type="interactions" value="2"/>
</dbReference>
<dbReference type="CORUM" id="P25092"/>
<dbReference type="FunCoup" id="P25092">
    <property type="interactions" value="485"/>
</dbReference>
<dbReference type="IntAct" id="P25092">
    <property type="interactions" value="4"/>
</dbReference>
<dbReference type="MINT" id="P25092"/>
<dbReference type="STRING" id="9606.ENSP00000261170"/>
<dbReference type="ChEMBL" id="CHEMBL1795197"/>
<dbReference type="DrugBank" id="DB08890">
    <property type="generic name" value="Linaclotide"/>
</dbReference>
<dbReference type="DrugBank" id="DB13170">
    <property type="generic name" value="Plecanatide"/>
</dbReference>
<dbReference type="DrugCentral" id="P25092"/>
<dbReference type="GuidetoPHARMACOLOGY" id="1750"/>
<dbReference type="TCDB" id="8.A.85.1.1">
    <property type="family name" value="the guanylate cyclase (gc) family"/>
</dbReference>
<dbReference type="GlyCosmos" id="P25092">
    <property type="glycosylation" value="8 sites, No reported glycans"/>
</dbReference>
<dbReference type="GlyGen" id="P25092">
    <property type="glycosylation" value="9 sites, 1 N-linked glycan (1 site)"/>
</dbReference>
<dbReference type="iPTMnet" id="P25092"/>
<dbReference type="PhosphoSitePlus" id="P25092"/>
<dbReference type="BioMuta" id="GUCY2C"/>
<dbReference type="DMDM" id="311033390"/>
<dbReference type="jPOST" id="P25092"/>
<dbReference type="MassIVE" id="P25092"/>
<dbReference type="PaxDb" id="9606-ENSP00000261170"/>
<dbReference type="PeptideAtlas" id="P25092"/>
<dbReference type="ProteomicsDB" id="54253"/>
<dbReference type="ABCD" id="P25092">
    <property type="antibodies" value="1 sequenced antibody"/>
</dbReference>
<dbReference type="Antibodypedia" id="12046">
    <property type="antibodies" value="320 antibodies from 27 providers"/>
</dbReference>
<dbReference type="DNASU" id="2984"/>
<dbReference type="Ensembl" id="ENST00000261170.5">
    <property type="protein sequence ID" value="ENSP00000261170.3"/>
    <property type="gene ID" value="ENSG00000070019.5"/>
</dbReference>
<dbReference type="GeneID" id="2984"/>
<dbReference type="KEGG" id="hsa:2984"/>
<dbReference type="MANE-Select" id="ENST00000261170.5">
    <property type="protein sequence ID" value="ENSP00000261170.3"/>
    <property type="RefSeq nucleotide sequence ID" value="NM_004963.4"/>
    <property type="RefSeq protein sequence ID" value="NP_004954.2"/>
</dbReference>
<dbReference type="UCSC" id="uc001rcd.4">
    <property type="organism name" value="human"/>
</dbReference>
<dbReference type="AGR" id="HGNC:4688"/>
<dbReference type="CTD" id="2984"/>
<dbReference type="DisGeNET" id="2984"/>
<dbReference type="GeneCards" id="GUCY2C"/>
<dbReference type="HGNC" id="HGNC:4688">
    <property type="gene designation" value="GUCY2C"/>
</dbReference>
<dbReference type="HPA" id="ENSG00000070019">
    <property type="expression patterns" value="Tissue enriched (intestine)"/>
</dbReference>
<dbReference type="MalaCards" id="GUCY2C"/>
<dbReference type="MIM" id="601330">
    <property type="type" value="gene"/>
</dbReference>
<dbReference type="MIM" id="614616">
    <property type="type" value="phenotype"/>
</dbReference>
<dbReference type="MIM" id="614665">
    <property type="type" value="phenotype"/>
</dbReference>
<dbReference type="neXtProt" id="NX_P25092"/>
<dbReference type="OpenTargets" id="ENSG00000070019"/>
<dbReference type="Orphanet" id="314373">
    <property type="disease" value="Chronic infantile diarrhea due to guanylate cyclase 2C overactivity"/>
</dbReference>
<dbReference type="Orphanet" id="103908">
    <property type="disease" value="Congenital sodium diarrhea"/>
</dbReference>
<dbReference type="Orphanet" id="314376">
    <property type="disease" value="Intestinal obstruction in the newborn due to guanylate cyclase 2C deficiency"/>
</dbReference>
<dbReference type="PharmGKB" id="PA29069"/>
<dbReference type="VEuPathDB" id="HostDB:ENSG00000070019"/>
<dbReference type="eggNOG" id="KOG1023">
    <property type="taxonomic scope" value="Eukaryota"/>
</dbReference>
<dbReference type="GeneTree" id="ENSGT00940000155955"/>
<dbReference type="HOGENOM" id="CLU_001072_1_3_1"/>
<dbReference type="InParanoid" id="P25092"/>
<dbReference type="OMA" id="NPALGWK"/>
<dbReference type="OrthoDB" id="60033at2759"/>
<dbReference type="PAN-GO" id="P25092">
    <property type="GO annotations" value="6 GO annotations based on evolutionary models"/>
</dbReference>
<dbReference type="PhylomeDB" id="P25092"/>
<dbReference type="BRENDA" id="4.6.1.2">
    <property type="organism ID" value="2681"/>
</dbReference>
<dbReference type="PathwayCommons" id="P25092"/>
<dbReference type="Reactome" id="R-HSA-8935690">
    <property type="pathway name" value="Digestion"/>
</dbReference>
<dbReference type="Reactome" id="R-HSA-8942233">
    <property type="pathway name" value="Intestinal infectious diseases"/>
</dbReference>
<dbReference type="SignaLink" id="P25092"/>
<dbReference type="SIGNOR" id="P25092"/>
<dbReference type="BioGRID-ORCS" id="2984">
    <property type="hits" value="7 hits in 1163 CRISPR screens"/>
</dbReference>
<dbReference type="ChiTaRS" id="GUCY2C">
    <property type="organism name" value="human"/>
</dbReference>
<dbReference type="GeneWiki" id="Guanylate_cyclase_2C"/>
<dbReference type="GenomeRNAi" id="2984"/>
<dbReference type="Pharos" id="P25092">
    <property type="development level" value="Tclin"/>
</dbReference>
<dbReference type="PRO" id="PR:P25092"/>
<dbReference type="Proteomes" id="UP000005640">
    <property type="component" value="Chromosome 12"/>
</dbReference>
<dbReference type="RNAct" id="P25092">
    <property type="molecule type" value="protein"/>
</dbReference>
<dbReference type="Bgee" id="ENSG00000070019">
    <property type="expression patterns" value="Expressed in jejunal mucosa and 60 other cell types or tissues"/>
</dbReference>
<dbReference type="GO" id="GO:0005789">
    <property type="term" value="C:endoplasmic reticulum membrane"/>
    <property type="evidence" value="ECO:0007669"/>
    <property type="project" value="UniProtKB-SubCell"/>
</dbReference>
<dbReference type="GO" id="GO:0005886">
    <property type="term" value="C:plasma membrane"/>
    <property type="evidence" value="ECO:0000318"/>
    <property type="project" value="GO_Central"/>
</dbReference>
<dbReference type="GO" id="GO:0005524">
    <property type="term" value="F:ATP binding"/>
    <property type="evidence" value="ECO:0007669"/>
    <property type="project" value="InterPro"/>
</dbReference>
<dbReference type="GO" id="GO:0005525">
    <property type="term" value="F:GTP binding"/>
    <property type="evidence" value="ECO:0007669"/>
    <property type="project" value="UniProtKB-KW"/>
</dbReference>
<dbReference type="GO" id="GO:0004383">
    <property type="term" value="F:guanylate cyclase activity"/>
    <property type="evidence" value="ECO:0000314"/>
    <property type="project" value="UniProtKB"/>
</dbReference>
<dbReference type="GO" id="GO:0001653">
    <property type="term" value="F:peptide receptor activity"/>
    <property type="evidence" value="ECO:0000318"/>
    <property type="project" value="GO_Central"/>
</dbReference>
<dbReference type="GO" id="GO:0004672">
    <property type="term" value="F:protein kinase activity"/>
    <property type="evidence" value="ECO:0007669"/>
    <property type="project" value="InterPro"/>
</dbReference>
<dbReference type="GO" id="GO:0015643">
    <property type="term" value="F:toxic substance binding"/>
    <property type="evidence" value="ECO:0007669"/>
    <property type="project" value="Ensembl"/>
</dbReference>
<dbReference type="GO" id="GO:0006182">
    <property type="term" value="P:cGMP biosynthetic process"/>
    <property type="evidence" value="ECO:0000318"/>
    <property type="project" value="GO_Central"/>
</dbReference>
<dbReference type="GO" id="GO:0035556">
    <property type="term" value="P:intracellular signal transduction"/>
    <property type="evidence" value="ECO:0007669"/>
    <property type="project" value="InterPro"/>
</dbReference>
<dbReference type="GO" id="GO:0007168">
    <property type="term" value="P:receptor guanylyl cyclase signaling pathway"/>
    <property type="evidence" value="ECO:0000318"/>
    <property type="project" value="GO_Central"/>
</dbReference>
<dbReference type="GO" id="GO:0042127">
    <property type="term" value="P:regulation of cell population proliferation"/>
    <property type="evidence" value="ECO:0007669"/>
    <property type="project" value="Ensembl"/>
</dbReference>
<dbReference type="GO" id="GO:0009636">
    <property type="term" value="P:response to toxic substance"/>
    <property type="evidence" value="ECO:0007669"/>
    <property type="project" value="Ensembl"/>
</dbReference>
<dbReference type="CDD" id="cd07302">
    <property type="entry name" value="CHD"/>
    <property type="match status" value="1"/>
</dbReference>
<dbReference type="CDD" id="cd06369">
    <property type="entry name" value="PBP1_GC_C_enterotoxin_receptor"/>
    <property type="match status" value="1"/>
</dbReference>
<dbReference type="CDD" id="cd14044">
    <property type="entry name" value="PK_GC-C"/>
    <property type="match status" value="1"/>
</dbReference>
<dbReference type="FunFam" id="1.10.510.10:FF:000364">
    <property type="entry name" value="Guanylate cyclase"/>
    <property type="match status" value="1"/>
</dbReference>
<dbReference type="FunFam" id="3.30.70.1230:FF:000015">
    <property type="entry name" value="Guanylate cyclase"/>
    <property type="match status" value="1"/>
</dbReference>
<dbReference type="FunFam" id="3.40.50.2300:FF:000185">
    <property type="entry name" value="Guanylate cyclase"/>
    <property type="match status" value="1"/>
</dbReference>
<dbReference type="Gene3D" id="3.40.50.2300">
    <property type="match status" value="1"/>
</dbReference>
<dbReference type="Gene3D" id="3.30.70.1230">
    <property type="entry name" value="Nucleotide cyclase"/>
    <property type="match status" value="1"/>
</dbReference>
<dbReference type="Gene3D" id="1.10.510.10">
    <property type="entry name" value="Transferase(Phosphotransferase) domain 1"/>
    <property type="match status" value="1"/>
</dbReference>
<dbReference type="InterPro" id="IPR001054">
    <property type="entry name" value="A/G_cyclase"/>
</dbReference>
<dbReference type="InterPro" id="IPR018297">
    <property type="entry name" value="A/G_cyclase_CS"/>
</dbReference>
<dbReference type="InterPro" id="IPR050401">
    <property type="entry name" value="Cyclic_nucleotide_synthase"/>
</dbReference>
<dbReference type="InterPro" id="IPR042822">
    <property type="entry name" value="GC-C_PK"/>
</dbReference>
<dbReference type="InterPro" id="IPR011009">
    <property type="entry name" value="Kinase-like_dom_sf"/>
</dbReference>
<dbReference type="InterPro" id="IPR029787">
    <property type="entry name" value="Nucleotide_cyclase"/>
</dbReference>
<dbReference type="InterPro" id="IPR028082">
    <property type="entry name" value="Peripla_BP_I"/>
</dbReference>
<dbReference type="InterPro" id="IPR000719">
    <property type="entry name" value="Prot_kinase_dom"/>
</dbReference>
<dbReference type="InterPro" id="IPR001245">
    <property type="entry name" value="Ser-Thr/Tyr_kinase_cat_dom"/>
</dbReference>
<dbReference type="PANTHER" id="PTHR11920">
    <property type="entry name" value="GUANYLYL CYCLASE"/>
    <property type="match status" value="1"/>
</dbReference>
<dbReference type="PANTHER" id="PTHR11920:SF347">
    <property type="entry name" value="GUANYLYL CYCLASE C"/>
    <property type="match status" value="1"/>
</dbReference>
<dbReference type="Pfam" id="PF00211">
    <property type="entry name" value="Guanylate_cyc"/>
    <property type="match status" value="1"/>
</dbReference>
<dbReference type="Pfam" id="PF07714">
    <property type="entry name" value="PK_Tyr_Ser-Thr"/>
    <property type="match status" value="1"/>
</dbReference>
<dbReference type="SMART" id="SM00044">
    <property type="entry name" value="CYCc"/>
    <property type="match status" value="1"/>
</dbReference>
<dbReference type="SUPFAM" id="SSF55073">
    <property type="entry name" value="Nucleotide cyclase"/>
    <property type="match status" value="1"/>
</dbReference>
<dbReference type="SUPFAM" id="SSF53822">
    <property type="entry name" value="Periplasmic binding protein-like I"/>
    <property type="match status" value="1"/>
</dbReference>
<dbReference type="SUPFAM" id="SSF56112">
    <property type="entry name" value="Protein kinase-like (PK-like)"/>
    <property type="match status" value="1"/>
</dbReference>
<dbReference type="PROSITE" id="PS00452">
    <property type="entry name" value="GUANYLATE_CYCLASE_1"/>
    <property type="match status" value="1"/>
</dbReference>
<dbReference type="PROSITE" id="PS50125">
    <property type="entry name" value="GUANYLATE_CYCLASE_2"/>
    <property type="match status" value="1"/>
</dbReference>
<dbReference type="PROSITE" id="PS50011">
    <property type="entry name" value="PROTEIN_KINASE_DOM"/>
    <property type="match status" value="1"/>
</dbReference>
<proteinExistence type="evidence at protein level"/>
<feature type="signal peptide" evidence="1">
    <location>
        <begin position="1"/>
        <end position="23"/>
    </location>
</feature>
<feature type="chain" id="PRO_0000012376" description="Guanylyl cyclase C">
    <location>
        <begin position="24"/>
        <end position="1073"/>
    </location>
</feature>
<feature type="topological domain" description="Extracellular" evidence="1">
    <location>
        <begin position="24"/>
        <end position="430"/>
    </location>
</feature>
<feature type="transmembrane region" description="Helical" evidence="1">
    <location>
        <begin position="431"/>
        <end position="454"/>
    </location>
</feature>
<feature type="topological domain" description="Cytoplasmic" evidence="1">
    <location>
        <begin position="455"/>
        <end position="1073"/>
    </location>
</feature>
<feature type="domain" description="Protein kinase" evidence="3">
    <location>
        <begin position="489"/>
        <end position="749"/>
    </location>
</feature>
<feature type="domain" description="Guanylate cyclase" evidence="2">
    <location>
        <begin position="824"/>
        <end position="954"/>
    </location>
</feature>
<feature type="site" description="Not glycosylated" evidence="12">
    <location>
        <position position="357"/>
    </location>
</feature>
<feature type="glycosylation site" description="N-linked (GlcNAc...) asparagine" evidence="12">
    <location>
        <position position="32"/>
    </location>
</feature>
<feature type="glycosylation site" description="N-linked (GlcNAc...) asparagine" evidence="12">
    <location>
        <position position="75"/>
    </location>
</feature>
<feature type="glycosylation site" description="N-linked (GlcNAc...) asparagine" evidence="12">
    <location>
        <position position="79"/>
    </location>
</feature>
<feature type="glycosylation site" description="N-linked (GlcNAc...) asparagine" evidence="12">
    <location>
        <position position="195"/>
    </location>
</feature>
<feature type="glycosylation site" description="N-linked (GlcNAc...) asparagine" evidence="12">
    <location>
        <position position="284"/>
    </location>
</feature>
<feature type="glycosylation site" description="N-linked (GlcNAc...) asparagine" evidence="12">
    <location>
        <position position="307"/>
    </location>
</feature>
<feature type="glycosylation site" description="N-linked (GlcNAc...) asparagine" evidence="12">
    <location>
        <position position="345"/>
    </location>
</feature>
<feature type="glycosylation site" description="N-linked (GlcNAc...) asparagine" evidence="12">
    <location>
        <position position="402"/>
    </location>
</feature>
<feature type="sequence variant" id="VAR_042221" description="In dbSNP:rs56142849." evidence="9">
    <original>C</original>
    <variation>R</variation>
    <location>
        <position position="30"/>
    </location>
</feature>
<feature type="sequence variant" id="VAR_042222" description="In a metastatic melanoma sample; somatic mutation." evidence="9">
    <original>G</original>
    <variation>R</variation>
    <location>
        <position position="61"/>
    </location>
</feature>
<feature type="sequence variant" id="VAR_042223" description="In dbSNP:rs56275235." evidence="9">
    <original>R</original>
    <variation>Q</variation>
    <location>
        <position position="114"/>
    </location>
</feature>
<feature type="sequence variant" id="VAR_049253" description="In dbSNP:rs1420635." evidence="6 7 8 13 14">
    <original>F</original>
    <variation>L</variation>
    <location>
        <position position="281"/>
    </location>
</feature>
<feature type="sequence variant" id="VAR_068174" description="In MECIL; activation of guanylate cyclase activity is 60% lower than in wild-type; dbSNP:rs587776905." evidence="11">
    <original>D</original>
    <variation>G</variation>
    <location>
        <position position="387"/>
    </location>
</feature>
<feature type="sequence variant" id="VAR_042224" description="In dbSNP:rs55684775." evidence="9">
    <original>R</original>
    <variation>L</variation>
    <location>
        <position position="464"/>
    </location>
</feature>
<feature type="sequence variant" id="VAR_042225" description="In dbSNP:rs55897626." evidence="9">
    <original>E</original>
    <variation>K</variation>
    <location>
        <position position="610"/>
    </location>
</feature>
<feature type="sequence variant" id="VAR_067724" description="In DIAR6; activating mutation; exposure of the mutant receptor to its ligands results in markedly increased production of cyclic guanosine monophosphate; dbSNP:rs587776871." evidence="10">
    <original>S</original>
    <variation>I</variation>
    <location>
        <position position="840"/>
    </location>
</feature>
<feature type="sequence variant" id="VAR_042226" description="In dbSNP:rs34890806." evidence="9">
    <original>I</original>
    <variation>V</variation>
    <location>
        <position position="859"/>
    </location>
</feature>
<feature type="sequence variant" id="VAR_042227" description="In dbSNP:rs35617837." evidence="9">
    <original>Q</original>
    <variation>R</variation>
    <location>
        <position position="1045"/>
    </location>
</feature>
<feature type="sequence variant" id="VAR_042228" description="In dbSNP:rs35179392." evidence="9">
    <original>Y</original>
    <variation>C</variation>
    <location>
        <position position="1072"/>
    </location>
</feature>
<feature type="sequence conflict" description="In Ref. 1; AAB19934." evidence="18" ref="1">
    <original>A</original>
    <variation>R</variation>
    <location>
        <position position="322"/>
    </location>
</feature>
<feature type="sequence conflict" description="In Ref. 1; AAB19934." evidence="18" ref="1">
    <original>L</original>
    <variation>V</variation>
    <location>
        <position position="331"/>
    </location>
</feature>
<feature type="sequence conflict" description="In Ref. 1; AAB19934." evidence="18" ref="1">
    <original>D</original>
    <variation>V</variation>
    <location>
        <position position="509"/>
    </location>
</feature>
<feature type="sequence conflict" description="In Ref. 1; AAB19934." evidence="18" ref="1">
    <original>N</original>
    <variation>T</variation>
    <location>
        <position position="543"/>
    </location>
</feature>
<feature type="helix" evidence="21">
    <location>
        <begin position="98"/>
        <end position="108"/>
    </location>
</feature>
<keyword id="KW-0002">3D-structure</keyword>
<keyword id="KW-1003">Cell membrane</keyword>
<keyword id="KW-0141">cGMP biosynthesis</keyword>
<keyword id="KW-0225">Disease variant</keyword>
<keyword id="KW-0256">Endoplasmic reticulum</keyword>
<keyword id="KW-0325">Glycoprotein</keyword>
<keyword id="KW-0342">GTP-binding</keyword>
<keyword id="KW-0456">Lyase</keyword>
<keyword id="KW-0472">Membrane</keyword>
<keyword id="KW-0547">Nucleotide-binding</keyword>
<keyword id="KW-1267">Proteomics identification</keyword>
<keyword id="KW-0675">Receptor</keyword>
<keyword id="KW-1185">Reference proteome</keyword>
<keyword id="KW-0732">Signal</keyword>
<keyword id="KW-0812">Transmembrane</keyword>
<keyword id="KW-1133">Transmembrane helix</keyword>
<accession>P25092</accession>
<accession>B2RMY6</accession>
<evidence type="ECO:0000255" key="1"/>
<evidence type="ECO:0000255" key="2">
    <source>
        <dbReference type="PROSITE-ProRule" id="PRU00099"/>
    </source>
</evidence>
<evidence type="ECO:0000255" key="3">
    <source>
        <dbReference type="PROSITE-ProRule" id="PRU00159"/>
    </source>
</evidence>
<evidence type="ECO:0000269" key="4">
    <source>
    </source>
</evidence>
<evidence type="ECO:0000269" key="5">
    <source>
    </source>
</evidence>
<evidence type="ECO:0000269" key="6">
    <source>
    </source>
</evidence>
<evidence type="ECO:0000269" key="7">
    <source>
    </source>
</evidence>
<evidence type="ECO:0000269" key="8">
    <source>
    </source>
</evidence>
<evidence type="ECO:0000269" key="9">
    <source>
    </source>
</evidence>
<evidence type="ECO:0000269" key="10">
    <source>
    </source>
</evidence>
<evidence type="ECO:0000269" key="11">
    <source>
    </source>
</evidence>
<evidence type="ECO:0000269" key="12">
    <source>
    </source>
</evidence>
<evidence type="ECO:0000269" key="13">
    <source>
    </source>
</evidence>
<evidence type="ECO:0000269" key="14">
    <source ref="4"/>
</evidence>
<evidence type="ECO:0000303" key="15">
    <source>
    </source>
</evidence>
<evidence type="ECO:0000303" key="16">
    <source>
    </source>
</evidence>
<evidence type="ECO:0000303" key="17">
    <source>
    </source>
</evidence>
<evidence type="ECO:0000305" key="18"/>
<evidence type="ECO:0000305" key="19">
    <source>
    </source>
</evidence>
<evidence type="ECO:0000312" key="20">
    <source>
        <dbReference type="HGNC" id="HGNC:4688"/>
    </source>
</evidence>
<evidence type="ECO:0007829" key="21">
    <source>
        <dbReference type="PDB" id="8GHO"/>
    </source>
</evidence>
<organism>
    <name type="scientific">Homo sapiens</name>
    <name type="common">Human</name>
    <dbReference type="NCBI Taxonomy" id="9606"/>
    <lineage>
        <taxon>Eukaryota</taxon>
        <taxon>Metazoa</taxon>
        <taxon>Chordata</taxon>
        <taxon>Craniata</taxon>
        <taxon>Vertebrata</taxon>
        <taxon>Euteleostomi</taxon>
        <taxon>Mammalia</taxon>
        <taxon>Eutheria</taxon>
        <taxon>Euarchontoglires</taxon>
        <taxon>Primates</taxon>
        <taxon>Haplorrhini</taxon>
        <taxon>Catarrhini</taxon>
        <taxon>Hominidae</taxon>
        <taxon>Homo</taxon>
    </lineage>
</organism>
<comment type="function">
    <text evidence="5 7 8 10 11 12 13">Guanylyl cyclase that catalyzes synthesis of cyclic GMP (cGMP) from GTP (PubMed:11950846, PubMed:1718270, PubMed:22436048, PubMed:22521417, PubMed:23269669). Receptor for the E.coli heat-stable enterotoxin; E.coli enterotoxin markedly stimulates the accumulation of cGMP in mammalian cells expressing GUCY2C (PubMed:1680854, PubMed:1718270). Also activated by the endogenous peptides guanylin and uroguanylin (PubMed:8381596).</text>
</comment>
<comment type="catalytic activity">
    <reaction evidence="5 12 19">
        <text>GTP = 3',5'-cyclic GMP + diphosphate</text>
        <dbReference type="Rhea" id="RHEA:13665"/>
        <dbReference type="ChEBI" id="CHEBI:33019"/>
        <dbReference type="ChEBI" id="CHEBI:37565"/>
        <dbReference type="ChEBI" id="CHEBI:57746"/>
        <dbReference type="EC" id="4.6.1.2"/>
    </reaction>
    <physiologicalReaction direction="left-to-right" evidence="5 19">
        <dbReference type="Rhea" id="RHEA:13666"/>
    </physiologicalReaction>
</comment>
<comment type="subunit">
    <text evidence="4 5 12">Homotrimer (PubMed:11123935). Interacts via its C-terminal region with NHERF4 (PubMed:11950846). Interacts with the lectin chaperone VIP36 (PubMed:23269669).</text>
</comment>
<comment type="interaction">
    <interactant intactId="EBI-2816795">
        <id>P25092</id>
    </interactant>
    <interactant intactId="EBI-8299496">
        <id>Q86UT5-2</id>
        <label>NHERF4</label>
    </interactant>
    <organismsDiffer>false</organismsDiffer>
    <experiments>4</experiments>
</comment>
<comment type="subcellular location">
    <subcellularLocation>
        <location evidence="12">Cell membrane</location>
        <topology evidence="12">Single-pass type I membrane protein</topology>
    </subcellularLocation>
    <subcellularLocation>
        <location evidence="12">Endoplasmic reticulum membrane</location>
        <topology evidence="12">Single-pass type I membrane protein</topology>
    </subcellularLocation>
    <text evidence="12">The 145 kDa plasma membrane form of GUCY2C contains sialic acid and galactose residues, while a differencially glycosylated 130 Kda form is a high mannose form that is resident in the endoplasmic reticulum and may serve as the precursor for the cell surface form.</text>
</comment>
<comment type="domain">
    <text>The protein kinase domain is predicted to be catalytically inactive.</text>
</comment>
<comment type="PTM">
    <text evidence="12">Glycosylation at Asn-75 and/or Asn-79 is required for interaction with VIP36 while glycosylation at Asn-345 and Asn-402 modulates ligand-mediated GUCY2C activation.</text>
</comment>
<comment type="disease" evidence="10">
    <disease id="DI-03451">
        <name>Diarrhea 6</name>
        <acronym>DIAR6</acronym>
        <description>A relatively mild, early-onset chronic diarrhea that may be associated with increased susceptibility to inflammatory bowel disease, small bowel obstruction, and esophagitis.</description>
        <dbReference type="MIM" id="614616"/>
    </disease>
    <text>The disease is caused by variants affecting the gene represented in this entry.</text>
</comment>
<comment type="disease" evidence="11">
    <disease id="DI-03452">
        <name>Meconium ileus</name>
        <acronym>MECIL</acronym>
        <description>A condition characterized by intestinal obstruction due to inspissated meconium in the distal ileum and cecum, which develops in utero and presents shortly after birth as a failure to pass meconium. Meconium ileus is a known clinical manifestation of cystic fibrosis.</description>
        <dbReference type="MIM" id="614665"/>
    </disease>
    <text>The disease is caused by variants affecting the gene represented in this entry.</text>
</comment>
<comment type="similarity">
    <text evidence="2">Belongs to the adenylyl cyclase class-4/guanylyl cyclase family.</text>
</comment>
<comment type="online information" name="Atlas of Genetics and Cytogenetics in Oncology and Haematology">
    <link uri="https://atlasgeneticsoncology.org/gene/43303/GUCY2C"/>
</comment>
<gene>
    <name evidence="17 20" type="primary">GUCY2C</name>
    <name type="synonym">GUC2C</name>
    <name evidence="16" type="synonym">STAR</name>
</gene>
<reference key="1">
    <citation type="journal article" date="1991" name="Biochem. Biophys. Res. Commun.">
        <title>Isolation and expression of a guanylate cyclase-coupled heat stable enterotoxin receptor cDNA from a human colonic cell line.</title>
        <authorList>
            <person name="Singh S."/>
            <person name="Singh G."/>
            <person name="Heim J.-M."/>
            <person name="Gerzer R."/>
        </authorList>
    </citation>
    <scope>NUCLEOTIDE SEQUENCE [MRNA]</scope>
    <scope>FUNCTION</scope>
    <scope>CATALYTIC ACTIVITY</scope>
    <scope>VARIANT LEU-281</scope>
</reference>
<reference key="2">
    <citation type="journal article" date="1991" name="J. Biol. Chem.">
        <title>Primary structure and functional expression of the human receptor for Escherichia coli heat-stable enterotoxin.</title>
        <authorList>
            <person name="de Sauvage F.J."/>
            <person name="Camerato T.R."/>
            <person name="Goeddel D.V."/>
        </authorList>
    </citation>
    <scope>NUCLEOTIDE SEQUENCE [MRNA]</scope>
    <scope>FUNCTION</scope>
    <scope>VARIANT LEU-281</scope>
</reference>
<reference key="3">
    <citation type="journal article" date="2006" name="Nature">
        <title>The finished DNA sequence of human chromosome 12.</title>
        <authorList>
            <person name="Scherer S.E."/>
            <person name="Muzny D.M."/>
            <person name="Buhay C.J."/>
            <person name="Chen R."/>
            <person name="Cree A."/>
            <person name="Ding Y."/>
            <person name="Dugan-Rocha S."/>
            <person name="Gill R."/>
            <person name="Gunaratne P."/>
            <person name="Harris R.A."/>
            <person name="Hawes A.C."/>
            <person name="Hernandez J."/>
            <person name="Hodgson A.V."/>
            <person name="Hume J."/>
            <person name="Jackson A."/>
            <person name="Khan Z.M."/>
            <person name="Kovar-Smith C."/>
            <person name="Lewis L.R."/>
            <person name="Lozado R.J."/>
            <person name="Metzker M.L."/>
            <person name="Milosavljevic A."/>
            <person name="Miner G.R."/>
            <person name="Montgomery K.T."/>
            <person name="Morgan M.B."/>
            <person name="Nazareth L.V."/>
            <person name="Scott G."/>
            <person name="Sodergren E."/>
            <person name="Song X.-Z."/>
            <person name="Steffen D."/>
            <person name="Lovering R.C."/>
            <person name="Wheeler D.A."/>
            <person name="Worley K.C."/>
            <person name="Yuan Y."/>
            <person name="Zhang Z."/>
            <person name="Adams C.Q."/>
            <person name="Ansari-Lari M.A."/>
            <person name="Ayele M."/>
            <person name="Brown M.J."/>
            <person name="Chen G."/>
            <person name="Chen Z."/>
            <person name="Clerc-Blankenburg K.P."/>
            <person name="Davis C."/>
            <person name="Delgado O."/>
            <person name="Dinh H.H."/>
            <person name="Draper H."/>
            <person name="Gonzalez-Garay M.L."/>
            <person name="Havlak P."/>
            <person name="Jackson L.R."/>
            <person name="Jacob L.S."/>
            <person name="Kelly S.H."/>
            <person name="Li L."/>
            <person name="Li Z."/>
            <person name="Liu J."/>
            <person name="Liu W."/>
            <person name="Lu J."/>
            <person name="Maheshwari M."/>
            <person name="Nguyen B.-V."/>
            <person name="Okwuonu G.O."/>
            <person name="Pasternak S."/>
            <person name="Perez L.M."/>
            <person name="Plopper F.J.H."/>
            <person name="Santibanez J."/>
            <person name="Shen H."/>
            <person name="Tabor P.E."/>
            <person name="Verduzco D."/>
            <person name="Waldron L."/>
            <person name="Wang Q."/>
            <person name="Williams G.A."/>
            <person name="Zhang J."/>
            <person name="Zhou J."/>
            <person name="Allen C.C."/>
            <person name="Amin A.G."/>
            <person name="Anyalebechi V."/>
            <person name="Bailey M."/>
            <person name="Barbaria J.A."/>
            <person name="Bimage K.E."/>
            <person name="Bryant N.P."/>
            <person name="Burch P.E."/>
            <person name="Burkett C.E."/>
            <person name="Burrell K.L."/>
            <person name="Calderon E."/>
            <person name="Cardenas V."/>
            <person name="Carter K."/>
            <person name="Casias K."/>
            <person name="Cavazos I."/>
            <person name="Cavazos S.R."/>
            <person name="Ceasar H."/>
            <person name="Chacko J."/>
            <person name="Chan S.N."/>
            <person name="Chavez D."/>
            <person name="Christopoulos C."/>
            <person name="Chu J."/>
            <person name="Cockrell R."/>
            <person name="Cox C.D."/>
            <person name="Dang M."/>
            <person name="Dathorne S.R."/>
            <person name="David R."/>
            <person name="Davis C.M."/>
            <person name="Davy-Carroll L."/>
            <person name="Deshazo D.R."/>
            <person name="Donlin J.E."/>
            <person name="D'Souza L."/>
            <person name="Eaves K.A."/>
            <person name="Egan A."/>
            <person name="Emery-Cohen A.J."/>
            <person name="Escotto M."/>
            <person name="Flagg N."/>
            <person name="Forbes L.D."/>
            <person name="Gabisi A.M."/>
            <person name="Garza M."/>
            <person name="Hamilton C."/>
            <person name="Henderson N."/>
            <person name="Hernandez O."/>
            <person name="Hines S."/>
            <person name="Hogues M.E."/>
            <person name="Huang M."/>
            <person name="Idlebird D.G."/>
            <person name="Johnson R."/>
            <person name="Jolivet A."/>
            <person name="Jones S."/>
            <person name="Kagan R."/>
            <person name="King L.M."/>
            <person name="Leal B."/>
            <person name="Lebow H."/>
            <person name="Lee S."/>
            <person name="LeVan J.M."/>
            <person name="Lewis L.C."/>
            <person name="London P."/>
            <person name="Lorensuhewa L.M."/>
            <person name="Loulseged H."/>
            <person name="Lovett D.A."/>
            <person name="Lucier A."/>
            <person name="Lucier R.L."/>
            <person name="Ma J."/>
            <person name="Madu R.C."/>
            <person name="Mapua P."/>
            <person name="Martindale A.D."/>
            <person name="Martinez E."/>
            <person name="Massey E."/>
            <person name="Mawhiney S."/>
            <person name="Meador M.G."/>
            <person name="Mendez S."/>
            <person name="Mercado C."/>
            <person name="Mercado I.C."/>
            <person name="Merritt C.E."/>
            <person name="Miner Z.L."/>
            <person name="Minja E."/>
            <person name="Mitchell T."/>
            <person name="Mohabbat F."/>
            <person name="Mohabbat K."/>
            <person name="Montgomery B."/>
            <person name="Moore N."/>
            <person name="Morris S."/>
            <person name="Munidasa M."/>
            <person name="Ngo R.N."/>
            <person name="Nguyen N.B."/>
            <person name="Nickerson E."/>
            <person name="Nwaokelemeh O.O."/>
            <person name="Nwokenkwo S."/>
            <person name="Obregon M."/>
            <person name="Oguh M."/>
            <person name="Oragunye N."/>
            <person name="Oviedo R.J."/>
            <person name="Parish B.J."/>
            <person name="Parker D.N."/>
            <person name="Parrish J."/>
            <person name="Parks K.L."/>
            <person name="Paul H.A."/>
            <person name="Payton B.A."/>
            <person name="Perez A."/>
            <person name="Perrin W."/>
            <person name="Pickens A."/>
            <person name="Primus E.L."/>
            <person name="Pu L.-L."/>
            <person name="Puazo M."/>
            <person name="Quiles M.M."/>
            <person name="Quiroz J.B."/>
            <person name="Rabata D."/>
            <person name="Reeves K."/>
            <person name="Ruiz S.J."/>
            <person name="Shao H."/>
            <person name="Sisson I."/>
            <person name="Sonaike T."/>
            <person name="Sorelle R.P."/>
            <person name="Sutton A.E."/>
            <person name="Svatek A.F."/>
            <person name="Svetz L.A."/>
            <person name="Tamerisa K.S."/>
            <person name="Taylor T.R."/>
            <person name="Teague B."/>
            <person name="Thomas N."/>
            <person name="Thorn R.D."/>
            <person name="Trejos Z.Y."/>
            <person name="Trevino B.K."/>
            <person name="Ukegbu O.N."/>
            <person name="Urban J.B."/>
            <person name="Vasquez L.I."/>
            <person name="Vera V.A."/>
            <person name="Villasana D.M."/>
            <person name="Wang L."/>
            <person name="Ward-Moore S."/>
            <person name="Warren J.T."/>
            <person name="Wei X."/>
            <person name="White F."/>
            <person name="Williamson A.L."/>
            <person name="Wleczyk R."/>
            <person name="Wooden H.S."/>
            <person name="Wooden S.H."/>
            <person name="Yen J."/>
            <person name="Yoon L."/>
            <person name="Yoon V."/>
            <person name="Zorrilla S.E."/>
            <person name="Nelson D."/>
            <person name="Kucherlapati R."/>
            <person name="Weinstock G."/>
            <person name="Gibbs R.A."/>
        </authorList>
    </citation>
    <scope>NUCLEOTIDE SEQUENCE [LARGE SCALE GENOMIC DNA]</scope>
</reference>
<reference key="4">
    <citation type="submission" date="2005-07" db="EMBL/GenBank/DDBJ databases">
        <authorList>
            <person name="Mural R.J."/>
            <person name="Istrail S."/>
            <person name="Sutton G.G."/>
            <person name="Florea L."/>
            <person name="Halpern A.L."/>
            <person name="Mobarry C.M."/>
            <person name="Lippert R."/>
            <person name="Walenz B."/>
            <person name="Shatkay H."/>
            <person name="Dew I."/>
            <person name="Miller J.R."/>
            <person name="Flanigan M.J."/>
            <person name="Edwards N.J."/>
            <person name="Bolanos R."/>
            <person name="Fasulo D."/>
            <person name="Halldorsson B.V."/>
            <person name="Hannenhalli S."/>
            <person name="Turner R."/>
            <person name="Yooseph S."/>
            <person name="Lu F."/>
            <person name="Nusskern D.R."/>
            <person name="Shue B.C."/>
            <person name="Zheng X.H."/>
            <person name="Zhong F."/>
            <person name="Delcher A.L."/>
            <person name="Huson D.H."/>
            <person name="Kravitz S.A."/>
            <person name="Mouchard L."/>
            <person name="Reinert K."/>
            <person name="Remington K.A."/>
            <person name="Clark A.G."/>
            <person name="Waterman M.S."/>
            <person name="Eichler E.E."/>
            <person name="Adams M.D."/>
            <person name="Hunkapiller M.W."/>
            <person name="Myers E.W."/>
            <person name="Venter J.C."/>
        </authorList>
    </citation>
    <scope>NUCLEOTIDE SEQUENCE [LARGE SCALE GENOMIC DNA]</scope>
    <scope>VARIANT LEU-281</scope>
</reference>
<reference key="5">
    <citation type="journal article" date="2004" name="Genome Res.">
        <title>The status, quality, and expansion of the NIH full-length cDNA project: the Mammalian Gene Collection (MGC).</title>
        <authorList>
            <consortium name="The MGC Project Team"/>
        </authorList>
    </citation>
    <scope>NUCLEOTIDE SEQUENCE [LARGE SCALE MRNA]</scope>
    <scope>VARIANT LEU-281</scope>
</reference>
<reference key="6">
    <citation type="journal article" date="1996" name="Biochim. Biophys. Acta">
        <title>Cell line-specific transcriptional activation of the promoter of the human guanylyl cyclase C/heat-stable enterotoxin receptor gene.</title>
        <authorList>
            <person name="Mann E.A."/>
            <person name="Jump M.L."/>
            <person name="Giannella R.A."/>
        </authorList>
    </citation>
    <scope>NUCLEOTIDE SEQUENCE [GENOMIC DNA] OF 1-72</scope>
    <source>
        <tissue>Placenta</tissue>
    </source>
</reference>
<reference key="7">
    <citation type="journal article" date="1993" name="Am. J. Physiol.">
        <title>Comparison of receptors for Escherichia coli heat-stable enterotoxin: novel receptor present in IEC-6 cells.</title>
        <authorList>
            <person name="Mann E.A."/>
            <person name="Cohen M.B."/>
            <person name="Giannella R.A."/>
        </authorList>
    </citation>
    <scope>NUCLEOTIDE SEQUENCE [GENOMIC DNA] OF 24-1073</scope>
    <scope>FUNCTION</scope>
    <scope>VARIANT LEU-281</scope>
    <source>
        <tissue>Colon carcinoma</tissue>
    </source>
</reference>
<reference key="8">
    <citation type="journal article" date="2000" name="Biochemistry">
        <title>Biochemical characterization of the intracellular domain of the human guanylyl cyclase C receptor provides evidence for a catalytically active homotrimer.</title>
        <authorList>
            <person name="Vijayachandra K."/>
            <person name="Guruprasad M."/>
            <person name="Bhandari R."/>
            <person name="Manjunath U.H."/>
            <person name="Somesh B.P."/>
            <person name="Srinivasan N."/>
            <person name="Suguna K."/>
            <person name="Visweswariah S.S."/>
        </authorList>
    </citation>
    <scope>SUBUNIT</scope>
</reference>
<reference key="9">
    <citation type="journal article" date="2002" name="J. Biol. Chem.">
        <title>A novel PDZ protein regulates the activity of guanylyl cyclase C, the heat-stable enterotoxin receptor.</title>
        <authorList>
            <person name="Scott R.O."/>
            <person name="Thelin W.R."/>
            <person name="Milgram S.L."/>
        </authorList>
    </citation>
    <scope>FUNCTION</scope>
    <scope>CATALYTIC ACTIVITY</scope>
    <scope>INTERACTION WITH NHERF4</scope>
</reference>
<reference key="10">
    <citation type="journal article" date="2013" name="J. Biol. Chem.">
        <title>Site-specific N-linked glycosylation of receptor guanylyl cyclase C regulates ligand binding, ligand-mediated activation and interaction with vesicular integral membrane protein 36, VIP36.</title>
        <authorList>
            <person name="Arshad N."/>
            <person name="Ballal S."/>
            <person name="Visweswariah S.S."/>
        </authorList>
    </citation>
    <scope>GLYCOSYLATION AT ASN-32; ASN-75; ASN-79; ASN-195; ASN-284; ASN-307; ASN-345 AND ASN-402</scope>
    <scope>LACK OF GLYCOSYLATION AT ASN-357</scope>
    <scope>FUNCTION</scope>
    <scope>CATALYTIC ACTIVITY</scope>
    <scope>INTERACTION WITH VIP36</scope>
    <scope>SUBCELLULAR LOCATION</scope>
</reference>
<reference key="11">
    <citation type="journal article" date="2012" name="Am. J. Hum. Genet.">
        <title>Meconium ileus caused by mutations in GUCY2C, encoding the CFTR-activating guanylate cyclase 2C.</title>
        <authorList>
            <person name="Romi H."/>
            <person name="Cohen I."/>
            <person name="Landau D."/>
            <person name="Alkrinawi S."/>
            <person name="Yerushalmi B."/>
            <person name="Hershkovitz R."/>
            <person name="Newman-Heiman N."/>
            <person name="Cutting G.R."/>
            <person name="Ofir R."/>
            <person name="Sivan S."/>
            <person name="Birk O.S."/>
        </authorList>
    </citation>
    <scope>VARIANT MECIL GLY-387</scope>
    <scope>FUNCTION</scope>
    <scope>CHARACTERIZATION OF VARIANT MECIL GLY-387</scope>
</reference>
<reference key="12">
    <citation type="journal article" date="2012" name="N. Engl. J. Med.">
        <title>Familial diarrhea syndrome caused by an activating GUCY2C mutation.</title>
        <authorList>
            <person name="Fiskerstrand T."/>
            <person name="Arshad N."/>
            <person name="Haukanes B.I."/>
            <person name="Tronstad R.R."/>
            <person name="Pham K.D."/>
            <person name="Johansson S."/>
            <person name="Havik B."/>
            <person name="Tonder S.L."/>
            <person name="Levy S.E."/>
            <person name="Brackman D."/>
            <person name="Boman H."/>
            <person name="Biswas K.H."/>
            <person name="Apold J."/>
            <person name="Hovdenak N."/>
            <person name="Visweswariah S.S."/>
            <person name="Knappskog P.M."/>
        </authorList>
    </citation>
    <scope>VARIANT DIAR6 ILE-840</scope>
    <scope>FUNCTION</scope>
    <scope>CHARACTERIZATION OF VARIANT DIAR6 ILE-840</scope>
</reference>
<reference key="13">
    <citation type="journal article" date="2007" name="Nature">
        <title>Patterns of somatic mutation in human cancer genomes.</title>
        <authorList>
            <person name="Greenman C."/>
            <person name="Stephens P."/>
            <person name="Smith R."/>
            <person name="Dalgliesh G.L."/>
            <person name="Hunter C."/>
            <person name="Bignell G."/>
            <person name="Davies H."/>
            <person name="Teague J."/>
            <person name="Butler A."/>
            <person name="Stevens C."/>
            <person name="Edkins S."/>
            <person name="O'Meara S."/>
            <person name="Vastrik I."/>
            <person name="Schmidt E.E."/>
            <person name="Avis T."/>
            <person name="Barthorpe S."/>
            <person name="Bhamra G."/>
            <person name="Buck G."/>
            <person name="Choudhury B."/>
            <person name="Clements J."/>
            <person name="Cole J."/>
            <person name="Dicks E."/>
            <person name="Forbes S."/>
            <person name="Gray K."/>
            <person name="Halliday K."/>
            <person name="Harrison R."/>
            <person name="Hills K."/>
            <person name="Hinton J."/>
            <person name="Jenkinson A."/>
            <person name="Jones D."/>
            <person name="Menzies A."/>
            <person name="Mironenko T."/>
            <person name="Perry J."/>
            <person name="Raine K."/>
            <person name="Richardson D."/>
            <person name="Shepherd R."/>
            <person name="Small A."/>
            <person name="Tofts C."/>
            <person name="Varian J."/>
            <person name="Webb T."/>
            <person name="West S."/>
            <person name="Widaa S."/>
            <person name="Yates A."/>
            <person name="Cahill D.P."/>
            <person name="Louis D.N."/>
            <person name="Goldstraw P."/>
            <person name="Nicholson A.G."/>
            <person name="Brasseur F."/>
            <person name="Looijenga L."/>
            <person name="Weber B.L."/>
            <person name="Chiew Y.-E."/>
            <person name="DeFazio A."/>
            <person name="Greaves M.F."/>
            <person name="Green A.R."/>
            <person name="Campbell P."/>
            <person name="Birney E."/>
            <person name="Easton D.F."/>
            <person name="Chenevix-Trench G."/>
            <person name="Tan M.-H."/>
            <person name="Khoo S.K."/>
            <person name="Teh B.T."/>
            <person name="Yuen S.T."/>
            <person name="Leung S.Y."/>
            <person name="Wooster R."/>
            <person name="Futreal P.A."/>
            <person name="Stratton M.R."/>
        </authorList>
    </citation>
    <scope>VARIANTS [LARGE SCALE ANALYSIS] ARG-30; ARG-61; GLN-114; LEU-464; LYS-610; VAL-859; ARG-1045 AND CYS-1072</scope>
</reference>